<proteinExistence type="inferred from homology"/>
<organism>
    <name type="scientific">Paraburkholderia xenovorans (strain LB400)</name>
    <dbReference type="NCBI Taxonomy" id="266265"/>
    <lineage>
        <taxon>Bacteria</taxon>
        <taxon>Pseudomonadati</taxon>
        <taxon>Pseudomonadota</taxon>
        <taxon>Betaproteobacteria</taxon>
        <taxon>Burkholderiales</taxon>
        <taxon>Burkholderiaceae</taxon>
        <taxon>Paraburkholderia</taxon>
    </lineage>
</organism>
<sequence length="753" mass="82467">MSSEAKCPFNHAAGGGTTNRDWWPKQLRLDLLSQHSGKSNPLDGGFNYAEAFRSLDLAAVKKDLAALMTDSQDWWPADFGHYGPLFIRMAWHSAGTYRIGDGRGGAGRGQQRFAPLNSWPDNVSLDKARRLLWPIKQKYGQKISWADLLILTGNVALETMGFKTFGFAGGREDTWEPDLDVYWGNEKTWLGGDVRYGKGAAGDNDDGGVIVADEEKHGEEVSRDNSGRNLENPLGAVQMGLIYVNPEGPDGNPDPLAAAHDIRETFARMAMNDEETVALIAGGHTFGKTHGAGPADNVGPEPEAADLENQGLGWKNSFGTGKGADTITSGLEVTWTTTPTKWGNGFFENLFKYEWELTKSPAGAHQWVARDAGETIPHAHDPSKKLRPTMLTTDLSLRFDPVYEKISRRFLENPDQLADAFARAWFKLTHRDMGPRARYLGPEVPAEELNWQDPIPALDHPLVNEQDIASLKQKILASGLSVSQLVSTAWASASTFRGSDKRGGANGARIRLAPQKDWPVNQPEQLAKVLKVLEGIQSEFNGVQSGGKKISLADLIVLGGAAAIEQAAKSAGQQVSVPFSPGRMDASQEQTDVQSVAALEPLADGFRNYLKGKYRAPAEALLIDKAQLLTLTAPEMTVLLGGLRALNVHAGQDSHGVFTHRPQTLSNDFFRNLLDMGTEWKPLSPARDVFEGRDRKTGELKWTGTRVDLVFGSHAQLRALCEVYASEDAQEKFVRDFVAAWAKVMDLDRFEIA</sequence>
<accession>Q13US7</accession>
<keyword id="KW-0349">Heme</keyword>
<keyword id="KW-0376">Hydrogen peroxide</keyword>
<keyword id="KW-0408">Iron</keyword>
<keyword id="KW-0479">Metal-binding</keyword>
<keyword id="KW-0560">Oxidoreductase</keyword>
<keyword id="KW-0575">Peroxidase</keyword>
<keyword id="KW-1185">Reference proteome</keyword>
<reference key="1">
    <citation type="journal article" date="2006" name="Proc. Natl. Acad. Sci. U.S.A.">
        <title>Burkholderia xenovorans LB400 harbors a multi-replicon, 9.73-Mbp genome shaped for versatility.</title>
        <authorList>
            <person name="Chain P.S.G."/>
            <person name="Denef V.J."/>
            <person name="Konstantinidis K.T."/>
            <person name="Vergez L.M."/>
            <person name="Agullo L."/>
            <person name="Reyes V.L."/>
            <person name="Hauser L."/>
            <person name="Cordova M."/>
            <person name="Gomez L."/>
            <person name="Gonzalez M."/>
            <person name="Land M."/>
            <person name="Lao V."/>
            <person name="Larimer F."/>
            <person name="LiPuma J.J."/>
            <person name="Mahenthiralingam E."/>
            <person name="Malfatti S.A."/>
            <person name="Marx C.J."/>
            <person name="Parnell J.J."/>
            <person name="Ramette A."/>
            <person name="Richardson P."/>
            <person name="Seeger M."/>
            <person name="Smith D."/>
            <person name="Spilker T."/>
            <person name="Sul W.J."/>
            <person name="Tsoi T.V."/>
            <person name="Ulrich L.E."/>
            <person name="Zhulin I.B."/>
            <person name="Tiedje J.M."/>
        </authorList>
    </citation>
    <scope>NUCLEOTIDE SEQUENCE [LARGE SCALE GENOMIC DNA]</scope>
    <source>
        <strain>LB400</strain>
    </source>
</reference>
<protein>
    <recommendedName>
        <fullName evidence="1">Catalase-peroxidase</fullName>
        <shortName evidence="1">CP</shortName>
        <ecNumber evidence="1">1.11.1.21</ecNumber>
    </recommendedName>
    <alternativeName>
        <fullName evidence="1">Peroxidase/catalase</fullName>
    </alternativeName>
</protein>
<gene>
    <name evidence="1" type="primary">katG</name>
    <name type="ordered locus">Bxeno_A3624</name>
    <name type="ORF">Bxe_A0772</name>
</gene>
<name>KATG_PARXL</name>
<dbReference type="EC" id="1.11.1.21" evidence="1"/>
<dbReference type="EMBL" id="CP000270">
    <property type="protein sequence ID" value="ABE32162.1"/>
    <property type="molecule type" value="Genomic_DNA"/>
</dbReference>
<dbReference type="RefSeq" id="WP_011489662.1">
    <property type="nucleotide sequence ID" value="NC_007951.1"/>
</dbReference>
<dbReference type="SMR" id="Q13US7"/>
<dbReference type="STRING" id="266265.Bxe_A0772"/>
<dbReference type="PeroxiBase" id="2290">
    <property type="entry name" value="BxCP01"/>
</dbReference>
<dbReference type="KEGG" id="bxb:DR64_2939"/>
<dbReference type="KEGG" id="bxe:Bxe_A0772"/>
<dbReference type="PATRIC" id="fig|266265.5.peg.3819"/>
<dbReference type="eggNOG" id="COG0376">
    <property type="taxonomic scope" value="Bacteria"/>
</dbReference>
<dbReference type="OrthoDB" id="9759743at2"/>
<dbReference type="Proteomes" id="UP000001817">
    <property type="component" value="Chromosome 1"/>
</dbReference>
<dbReference type="GO" id="GO:0005829">
    <property type="term" value="C:cytosol"/>
    <property type="evidence" value="ECO:0007669"/>
    <property type="project" value="TreeGrafter"/>
</dbReference>
<dbReference type="GO" id="GO:0004096">
    <property type="term" value="F:catalase activity"/>
    <property type="evidence" value="ECO:0007669"/>
    <property type="project" value="UniProtKB-UniRule"/>
</dbReference>
<dbReference type="GO" id="GO:0020037">
    <property type="term" value="F:heme binding"/>
    <property type="evidence" value="ECO:0007669"/>
    <property type="project" value="InterPro"/>
</dbReference>
<dbReference type="GO" id="GO:0046872">
    <property type="term" value="F:metal ion binding"/>
    <property type="evidence" value="ECO:0007669"/>
    <property type="project" value="UniProtKB-KW"/>
</dbReference>
<dbReference type="GO" id="GO:0070301">
    <property type="term" value="P:cellular response to hydrogen peroxide"/>
    <property type="evidence" value="ECO:0007669"/>
    <property type="project" value="TreeGrafter"/>
</dbReference>
<dbReference type="GO" id="GO:0042744">
    <property type="term" value="P:hydrogen peroxide catabolic process"/>
    <property type="evidence" value="ECO:0007669"/>
    <property type="project" value="UniProtKB-KW"/>
</dbReference>
<dbReference type="CDD" id="cd00649">
    <property type="entry name" value="catalase_peroxidase_1"/>
    <property type="match status" value="1"/>
</dbReference>
<dbReference type="CDD" id="cd08200">
    <property type="entry name" value="catalase_peroxidase_2"/>
    <property type="match status" value="1"/>
</dbReference>
<dbReference type="FunFam" id="1.10.420.10:FF:000002">
    <property type="entry name" value="Catalase-peroxidase"/>
    <property type="match status" value="1"/>
</dbReference>
<dbReference type="FunFam" id="1.10.420.10:FF:000004">
    <property type="entry name" value="Catalase-peroxidase"/>
    <property type="match status" value="1"/>
</dbReference>
<dbReference type="FunFam" id="1.10.520.10:FF:000002">
    <property type="entry name" value="Catalase-peroxidase"/>
    <property type="match status" value="1"/>
</dbReference>
<dbReference type="FunFam" id="1.10.520.10:FF:000004">
    <property type="entry name" value="Catalase-peroxidase"/>
    <property type="match status" value="1"/>
</dbReference>
<dbReference type="Gene3D" id="1.10.520.10">
    <property type="match status" value="2"/>
</dbReference>
<dbReference type="Gene3D" id="1.10.420.10">
    <property type="entry name" value="Peroxidase, domain 2"/>
    <property type="match status" value="2"/>
</dbReference>
<dbReference type="HAMAP" id="MF_01961">
    <property type="entry name" value="Catal_peroxid"/>
    <property type="match status" value="1"/>
</dbReference>
<dbReference type="InterPro" id="IPR000763">
    <property type="entry name" value="Catalase_peroxidase"/>
</dbReference>
<dbReference type="InterPro" id="IPR002016">
    <property type="entry name" value="Haem_peroxidase"/>
</dbReference>
<dbReference type="InterPro" id="IPR010255">
    <property type="entry name" value="Haem_peroxidase_sf"/>
</dbReference>
<dbReference type="InterPro" id="IPR019794">
    <property type="entry name" value="Peroxidases_AS"/>
</dbReference>
<dbReference type="InterPro" id="IPR019793">
    <property type="entry name" value="Peroxidases_heam-ligand_BS"/>
</dbReference>
<dbReference type="NCBIfam" id="TIGR00198">
    <property type="entry name" value="cat_per_HPI"/>
    <property type="match status" value="1"/>
</dbReference>
<dbReference type="NCBIfam" id="NF011635">
    <property type="entry name" value="PRK15061.1"/>
    <property type="match status" value="1"/>
</dbReference>
<dbReference type="PANTHER" id="PTHR30555:SF0">
    <property type="entry name" value="CATALASE-PEROXIDASE"/>
    <property type="match status" value="1"/>
</dbReference>
<dbReference type="PANTHER" id="PTHR30555">
    <property type="entry name" value="HYDROPEROXIDASE I, BIFUNCTIONAL CATALASE-PEROXIDASE"/>
    <property type="match status" value="1"/>
</dbReference>
<dbReference type="Pfam" id="PF00141">
    <property type="entry name" value="peroxidase"/>
    <property type="match status" value="2"/>
</dbReference>
<dbReference type="PRINTS" id="PR00460">
    <property type="entry name" value="BPEROXIDASE"/>
</dbReference>
<dbReference type="PRINTS" id="PR00458">
    <property type="entry name" value="PEROXIDASE"/>
</dbReference>
<dbReference type="SUPFAM" id="SSF48113">
    <property type="entry name" value="Heme-dependent peroxidases"/>
    <property type="match status" value="2"/>
</dbReference>
<dbReference type="PROSITE" id="PS00435">
    <property type="entry name" value="PEROXIDASE_1"/>
    <property type="match status" value="1"/>
</dbReference>
<dbReference type="PROSITE" id="PS00436">
    <property type="entry name" value="PEROXIDASE_2"/>
    <property type="match status" value="1"/>
</dbReference>
<dbReference type="PROSITE" id="PS50873">
    <property type="entry name" value="PEROXIDASE_4"/>
    <property type="match status" value="1"/>
</dbReference>
<evidence type="ECO:0000255" key="1">
    <source>
        <dbReference type="HAMAP-Rule" id="MF_01961"/>
    </source>
</evidence>
<comment type="function">
    <text evidence="1">Bifunctional enzyme with both catalase and broad-spectrum peroxidase activity.</text>
</comment>
<comment type="catalytic activity">
    <reaction evidence="1">
        <text>H2O2 + AH2 = A + 2 H2O</text>
        <dbReference type="Rhea" id="RHEA:30275"/>
        <dbReference type="ChEBI" id="CHEBI:13193"/>
        <dbReference type="ChEBI" id="CHEBI:15377"/>
        <dbReference type="ChEBI" id="CHEBI:16240"/>
        <dbReference type="ChEBI" id="CHEBI:17499"/>
        <dbReference type="EC" id="1.11.1.21"/>
    </reaction>
</comment>
<comment type="catalytic activity">
    <reaction evidence="1">
        <text>2 H2O2 = O2 + 2 H2O</text>
        <dbReference type="Rhea" id="RHEA:20309"/>
        <dbReference type="ChEBI" id="CHEBI:15377"/>
        <dbReference type="ChEBI" id="CHEBI:15379"/>
        <dbReference type="ChEBI" id="CHEBI:16240"/>
        <dbReference type="EC" id="1.11.1.21"/>
    </reaction>
</comment>
<comment type="cofactor">
    <cofactor evidence="1">
        <name>heme b</name>
        <dbReference type="ChEBI" id="CHEBI:60344"/>
    </cofactor>
    <text evidence="1">Binds 1 heme b (iron(II)-protoporphyrin IX) group per dimer.</text>
</comment>
<comment type="subunit">
    <text evidence="1">Homodimer or homotetramer.</text>
</comment>
<comment type="PTM">
    <text evidence="1">Formation of the three residue Trp-Tyr-Met cross-link is important for the catalase, but not the peroxidase activity of the enzyme.</text>
</comment>
<comment type="similarity">
    <text evidence="1">Belongs to the peroxidase family. Peroxidase/catalase subfamily.</text>
</comment>
<feature type="chain" id="PRO_0000354753" description="Catalase-peroxidase">
    <location>
        <begin position="1"/>
        <end position="753"/>
    </location>
</feature>
<feature type="active site" description="Proton acceptor" evidence="1">
    <location>
        <position position="92"/>
    </location>
</feature>
<feature type="binding site" description="axial binding residue" evidence="1">
    <location>
        <position position="284"/>
    </location>
    <ligand>
        <name>heme b</name>
        <dbReference type="ChEBI" id="CHEBI:60344"/>
    </ligand>
    <ligandPart>
        <name>Fe</name>
        <dbReference type="ChEBI" id="CHEBI:18248"/>
    </ligandPart>
</feature>
<feature type="site" description="Transition state stabilizer" evidence="1">
    <location>
        <position position="88"/>
    </location>
</feature>
<feature type="cross-link" description="Tryptophyl-tyrosyl-methioninium (Trp-Tyr) (with M-269)" evidence="1">
    <location>
        <begin position="91"/>
        <end position="243"/>
    </location>
</feature>
<feature type="cross-link" description="Tryptophyl-tyrosyl-methioninium (Tyr-Met) (with W-91)" evidence="1">
    <location>
        <begin position="243"/>
        <end position="269"/>
    </location>
</feature>